<organism>
    <name type="scientific">Pseudomonas putida (strain ATCC 47054 / DSM 6125 / CFBP 8728 / NCIMB 11950 / KT2440)</name>
    <dbReference type="NCBI Taxonomy" id="160488"/>
    <lineage>
        <taxon>Bacteria</taxon>
        <taxon>Pseudomonadati</taxon>
        <taxon>Pseudomonadota</taxon>
        <taxon>Gammaproteobacteria</taxon>
        <taxon>Pseudomonadales</taxon>
        <taxon>Pseudomonadaceae</taxon>
        <taxon>Pseudomonas</taxon>
    </lineage>
</organism>
<sequence length="91" mass="10314">MSFDRNQVPNWRPGYRFQYEPAQKGHVLLYPEGMIKLNDSASLIGGLIDGQRDVAAIISELEQQFPGVPEVADDIEQFMEVARAEHWIVLA</sequence>
<protein>
    <recommendedName>
        <fullName>PqqA binding protein 1</fullName>
    </recommendedName>
    <alternativeName>
        <fullName>Coenzyme PQQ synthesis protein D 1</fullName>
    </alternativeName>
    <alternativeName>
        <fullName>Pyrroloquinoline quinone biosynthesis protein D 1</fullName>
    </alternativeName>
</protein>
<evidence type="ECO:0000305" key="1"/>
<keyword id="KW-0884">PQQ biosynthesis</keyword>
<keyword id="KW-1185">Reference proteome</keyword>
<dbReference type="EMBL" id="AE015451">
    <property type="protein sequence ID" value="AAN66008.1"/>
    <property type="molecule type" value="Genomic_DNA"/>
</dbReference>
<dbReference type="RefSeq" id="NP_742544.1">
    <property type="nucleotide sequence ID" value="NC_002947.4"/>
</dbReference>
<dbReference type="SMR" id="Q88QV7"/>
<dbReference type="STRING" id="160488.PP_0377"/>
<dbReference type="PaxDb" id="160488-PP_0377"/>
<dbReference type="DNASU" id="1044087"/>
<dbReference type="KEGG" id="ppu:PP_0377"/>
<dbReference type="PATRIC" id="fig|160488.4.peg.407"/>
<dbReference type="eggNOG" id="ENOG5032Z81">
    <property type="taxonomic scope" value="Bacteria"/>
</dbReference>
<dbReference type="HOGENOM" id="CLU_163864_2_1_6"/>
<dbReference type="OrthoDB" id="7356791at2"/>
<dbReference type="PhylomeDB" id="Q88QV7"/>
<dbReference type="BioCyc" id="PPUT160488:G1G01-412-MONOMER"/>
<dbReference type="UniPathway" id="UPA00539"/>
<dbReference type="Proteomes" id="UP000000556">
    <property type="component" value="Chromosome"/>
</dbReference>
<dbReference type="GO" id="GO:0048038">
    <property type="term" value="F:quinone binding"/>
    <property type="evidence" value="ECO:0007669"/>
    <property type="project" value="InterPro"/>
</dbReference>
<dbReference type="GO" id="GO:0018189">
    <property type="term" value="P:pyrroloquinoline quinone biosynthetic process"/>
    <property type="evidence" value="ECO:0007669"/>
    <property type="project" value="UniProtKB-UniRule"/>
</dbReference>
<dbReference type="Gene3D" id="1.10.10.1150">
    <property type="entry name" value="Coenzyme PQQ synthesis protein D (PqqD)"/>
    <property type="match status" value="1"/>
</dbReference>
<dbReference type="HAMAP" id="MF_00655">
    <property type="entry name" value="PQQ_syn_PqqD"/>
    <property type="match status" value="1"/>
</dbReference>
<dbReference type="InterPro" id="IPR008792">
    <property type="entry name" value="PQQD"/>
</dbReference>
<dbReference type="InterPro" id="IPR022479">
    <property type="entry name" value="PqqD_bac"/>
</dbReference>
<dbReference type="InterPro" id="IPR041881">
    <property type="entry name" value="PqqD_sf"/>
</dbReference>
<dbReference type="NCBIfam" id="TIGR03859">
    <property type="entry name" value="PQQ_PqqD"/>
    <property type="match status" value="1"/>
</dbReference>
<dbReference type="NCBIfam" id="NF002535">
    <property type="entry name" value="PRK02079.1"/>
    <property type="match status" value="1"/>
</dbReference>
<dbReference type="Pfam" id="PF05402">
    <property type="entry name" value="PqqD"/>
    <property type="match status" value="1"/>
</dbReference>
<feature type="chain" id="PRO_0000219966" description="PqqA binding protein 1">
    <location>
        <begin position="1"/>
        <end position="91"/>
    </location>
</feature>
<proteinExistence type="inferred from homology"/>
<gene>
    <name type="primary">pqqD1</name>
    <name type="ordered locus">PP_0377</name>
</gene>
<accession>Q88QV7</accession>
<name>PQQD1_PSEPK</name>
<reference key="1">
    <citation type="journal article" date="2002" name="Environ. Microbiol.">
        <title>Complete genome sequence and comparative analysis of the metabolically versatile Pseudomonas putida KT2440.</title>
        <authorList>
            <person name="Nelson K.E."/>
            <person name="Weinel C."/>
            <person name="Paulsen I.T."/>
            <person name="Dodson R.J."/>
            <person name="Hilbert H."/>
            <person name="Martins dos Santos V.A.P."/>
            <person name="Fouts D.E."/>
            <person name="Gill S.R."/>
            <person name="Pop M."/>
            <person name="Holmes M."/>
            <person name="Brinkac L.M."/>
            <person name="Beanan M.J."/>
            <person name="DeBoy R.T."/>
            <person name="Daugherty S.C."/>
            <person name="Kolonay J.F."/>
            <person name="Madupu R."/>
            <person name="Nelson W.C."/>
            <person name="White O."/>
            <person name="Peterson J.D."/>
            <person name="Khouri H.M."/>
            <person name="Hance I."/>
            <person name="Chris Lee P."/>
            <person name="Holtzapple E.K."/>
            <person name="Scanlan D."/>
            <person name="Tran K."/>
            <person name="Moazzez A."/>
            <person name="Utterback T.R."/>
            <person name="Rizzo M."/>
            <person name="Lee K."/>
            <person name="Kosack D."/>
            <person name="Moestl D."/>
            <person name="Wedler H."/>
            <person name="Lauber J."/>
            <person name="Stjepandic D."/>
            <person name="Hoheisel J."/>
            <person name="Straetz M."/>
            <person name="Heim S."/>
            <person name="Kiewitz C."/>
            <person name="Eisen J.A."/>
            <person name="Timmis K.N."/>
            <person name="Duesterhoeft A."/>
            <person name="Tuemmler B."/>
            <person name="Fraser C.M."/>
        </authorList>
    </citation>
    <scope>NUCLEOTIDE SEQUENCE [LARGE SCALE GENOMIC DNA]</scope>
    <source>
        <strain>ATCC 47054 / DSM 6125 / CFBP 8728 / NCIMB 11950 / KT2440</strain>
    </source>
</reference>
<comment type="function">
    <text>Functions as a PqqA binding protein and presents PqqA to PqqE, in the pyrroloquinoline quinone (PQQ) biosynthetic pathway.</text>
</comment>
<comment type="pathway">
    <text>Cofactor biosynthesis; pyrroloquinoline quinone biosynthesis.</text>
</comment>
<comment type="subunit">
    <text>Monomer. Interacts with PqqE.</text>
</comment>
<comment type="similarity">
    <text evidence="1">Belongs to the PqqD family.</text>
</comment>